<reference key="1">
    <citation type="journal article" date="2005" name="Nucleic Acids Res.">
        <title>The genome sequence of Xanthomonas oryzae pathovar oryzae KACC10331, the bacterial blight pathogen of rice.</title>
        <authorList>
            <person name="Lee B.-M."/>
            <person name="Park Y.-J."/>
            <person name="Park D.-S."/>
            <person name="Kang H.-W."/>
            <person name="Kim J.-G."/>
            <person name="Song E.-S."/>
            <person name="Park I.-C."/>
            <person name="Yoon U.-H."/>
            <person name="Hahn J.-H."/>
            <person name="Koo B.-S."/>
            <person name="Lee G.-B."/>
            <person name="Kim H."/>
            <person name="Park H.-S."/>
            <person name="Yoon K.-O."/>
            <person name="Kim J.-H."/>
            <person name="Jung C.-H."/>
            <person name="Koh N.-H."/>
            <person name="Seo J.-S."/>
            <person name="Go S.-J."/>
        </authorList>
    </citation>
    <scope>NUCLEOTIDE SEQUENCE [LARGE SCALE GENOMIC DNA]</scope>
    <source>
        <strain>KACC10331 / KXO85</strain>
    </source>
</reference>
<evidence type="ECO:0000255" key="1">
    <source>
        <dbReference type="HAMAP-Rule" id="MF_00362"/>
    </source>
</evidence>
<evidence type="ECO:0000305" key="2"/>
<name>RL10_XANOR</name>
<protein>
    <recommendedName>
        <fullName evidence="1">Large ribosomal subunit protein uL10</fullName>
    </recommendedName>
    <alternativeName>
        <fullName evidence="2">50S ribosomal protein L10</fullName>
    </alternativeName>
</protein>
<accession>Q5GWS4</accession>
<sequence>MALNLSQKQEVVAELADVAAKAHSLIAAEYAGTTVSQMTAMRKQARETGVFLKVVKNTLAARAVEGTDFAVAADKLVGPLLYAFSMEEPGAAGRLIKEFAKSNDKLQAKVVSIGGELFPAGHVDVLASLPTRDQALAMLARVLSEPAAMFARAVKAVGDKQGGGDAAAAAVAETAEA</sequence>
<feature type="chain" id="PRO_0000234908" description="Large ribosomal subunit protein uL10">
    <location>
        <begin position="1"/>
        <end position="177"/>
    </location>
</feature>
<organism>
    <name type="scientific">Xanthomonas oryzae pv. oryzae (strain KACC10331 / KXO85)</name>
    <dbReference type="NCBI Taxonomy" id="291331"/>
    <lineage>
        <taxon>Bacteria</taxon>
        <taxon>Pseudomonadati</taxon>
        <taxon>Pseudomonadota</taxon>
        <taxon>Gammaproteobacteria</taxon>
        <taxon>Lysobacterales</taxon>
        <taxon>Lysobacteraceae</taxon>
        <taxon>Xanthomonas</taxon>
    </lineage>
</organism>
<proteinExistence type="inferred from homology"/>
<comment type="function">
    <text evidence="1">Forms part of the ribosomal stalk, playing a central role in the interaction of the ribosome with GTP-bound translation factors.</text>
</comment>
<comment type="subunit">
    <text evidence="1">Part of the ribosomal stalk of the 50S ribosomal subunit. The N-terminus interacts with L11 and the large rRNA to form the base of the stalk. The C-terminus forms an elongated spine to which L12 dimers bind in a sequential fashion forming a multimeric L10(L12)X complex.</text>
</comment>
<comment type="similarity">
    <text evidence="1">Belongs to the universal ribosomal protein uL10 family.</text>
</comment>
<dbReference type="EMBL" id="AE013598">
    <property type="protein sequence ID" value="AAW76847.1"/>
    <property type="molecule type" value="Genomic_DNA"/>
</dbReference>
<dbReference type="SMR" id="Q5GWS4"/>
<dbReference type="STRING" id="291331.XOO3593"/>
<dbReference type="KEGG" id="xoo:XOO3593"/>
<dbReference type="HOGENOM" id="CLU_092227_0_1_6"/>
<dbReference type="Proteomes" id="UP000006735">
    <property type="component" value="Chromosome"/>
</dbReference>
<dbReference type="GO" id="GO:1990904">
    <property type="term" value="C:ribonucleoprotein complex"/>
    <property type="evidence" value="ECO:0007669"/>
    <property type="project" value="UniProtKB-KW"/>
</dbReference>
<dbReference type="GO" id="GO:0005840">
    <property type="term" value="C:ribosome"/>
    <property type="evidence" value="ECO:0007669"/>
    <property type="project" value="UniProtKB-KW"/>
</dbReference>
<dbReference type="GO" id="GO:0070180">
    <property type="term" value="F:large ribosomal subunit rRNA binding"/>
    <property type="evidence" value="ECO:0007669"/>
    <property type="project" value="UniProtKB-UniRule"/>
</dbReference>
<dbReference type="GO" id="GO:0006412">
    <property type="term" value="P:translation"/>
    <property type="evidence" value="ECO:0007669"/>
    <property type="project" value="UniProtKB-UniRule"/>
</dbReference>
<dbReference type="CDD" id="cd05797">
    <property type="entry name" value="Ribosomal_L10"/>
    <property type="match status" value="1"/>
</dbReference>
<dbReference type="FunFam" id="3.30.70.1730:FF:000001">
    <property type="entry name" value="50S ribosomal protein L10"/>
    <property type="match status" value="1"/>
</dbReference>
<dbReference type="Gene3D" id="3.30.70.1730">
    <property type="match status" value="1"/>
</dbReference>
<dbReference type="HAMAP" id="MF_00362">
    <property type="entry name" value="Ribosomal_uL10"/>
    <property type="match status" value="1"/>
</dbReference>
<dbReference type="InterPro" id="IPR001790">
    <property type="entry name" value="Ribosomal_uL10"/>
</dbReference>
<dbReference type="InterPro" id="IPR043141">
    <property type="entry name" value="Ribosomal_uL10-like_sf"/>
</dbReference>
<dbReference type="InterPro" id="IPR022973">
    <property type="entry name" value="Ribosomal_uL10_bac"/>
</dbReference>
<dbReference type="InterPro" id="IPR047865">
    <property type="entry name" value="Ribosomal_uL10_bac_type"/>
</dbReference>
<dbReference type="NCBIfam" id="NF000955">
    <property type="entry name" value="PRK00099.1-1"/>
    <property type="match status" value="1"/>
</dbReference>
<dbReference type="PANTHER" id="PTHR11560">
    <property type="entry name" value="39S RIBOSOMAL PROTEIN L10, MITOCHONDRIAL"/>
    <property type="match status" value="1"/>
</dbReference>
<dbReference type="Pfam" id="PF00466">
    <property type="entry name" value="Ribosomal_L10"/>
    <property type="match status" value="1"/>
</dbReference>
<dbReference type="SUPFAM" id="SSF160369">
    <property type="entry name" value="Ribosomal protein L10-like"/>
    <property type="match status" value="1"/>
</dbReference>
<keyword id="KW-1185">Reference proteome</keyword>
<keyword id="KW-0687">Ribonucleoprotein</keyword>
<keyword id="KW-0689">Ribosomal protein</keyword>
<keyword id="KW-0694">RNA-binding</keyword>
<keyword id="KW-0699">rRNA-binding</keyword>
<gene>
    <name evidence="1" type="primary">rplJ</name>
    <name type="ordered locus">XOO3593</name>
</gene>